<comment type="function">
    <text evidence="1">Involved in the transmission of sensory signals from the chemoreceptors to the flagellar motors. CheA is autophosphorylated; it can transfer its phosphate group to either CheB or CheY (By similarity).</text>
</comment>
<comment type="catalytic activity">
    <reaction>
        <text>ATP + protein L-histidine = ADP + protein N-phospho-L-histidine.</text>
        <dbReference type="EC" id="2.7.13.3"/>
    </reaction>
</comment>
<comment type="subcellular location">
    <subcellularLocation>
        <location evidence="5">Cytoplasm</location>
    </subcellularLocation>
</comment>
<evidence type="ECO:0000250" key="1"/>
<evidence type="ECO:0000255" key="2">
    <source>
        <dbReference type="PROSITE-ProRule" id="PRU00052"/>
    </source>
</evidence>
<evidence type="ECO:0000255" key="3">
    <source>
        <dbReference type="PROSITE-ProRule" id="PRU00107"/>
    </source>
</evidence>
<evidence type="ECO:0000255" key="4">
    <source>
        <dbReference type="PROSITE-ProRule" id="PRU00110"/>
    </source>
</evidence>
<evidence type="ECO:0000305" key="5"/>
<proteinExistence type="inferred from homology"/>
<dbReference type="EC" id="2.7.13.3"/>
<dbReference type="EMBL" id="U28962">
    <property type="protein sequence ID" value="AAB96835.1"/>
    <property type="molecule type" value="Genomic_DNA"/>
</dbReference>
<dbReference type="EMBL" id="AE000783">
    <property type="protein sequence ID" value="AAC67024.1"/>
    <property type="molecule type" value="Genomic_DNA"/>
</dbReference>
<dbReference type="EMBL" id="U62900">
    <property type="protein sequence ID" value="AAC44771.1"/>
    <property type="molecule type" value="Genomic_DNA"/>
</dbReference>
<dbReference type="EMBL" id="X91907">
    <property type="protein sequence ID" value="CAA63002.1"/>
    <property type="molecule type" value="Genomic_DNA"/>
</dbReference>
<dbReference type="PIR" id="D70183">
    <property type="entry name" value="D70183"/>
</dbReference>
<dbReference type="RefSeq" id="NP_212803.1">
    <property type="nucleotide sequence ID" value="NC_001318.1"/>
</dbReference>
<dbReference type="RefSeq" id="WP_010889794.1">
    <property type="nucleotide sequence ID" value="NC_001318.1"/>
</dbReference>
<dbReference type="SMR" id="Q44737"/>
<dbReference type="STRING" id="224326.BB_0669"/>
<dbReference type="PaxDb" id="224326-BB_0669"/>
<dbReference type="EnsemblBacteria" id="AAC67024">
    <property type="protein sequence ID" value="AAC67024"/>
    <property type="gene ID" value="BB_0669"/>
</dbReference>
<dbReference type="KEGG" id="bbu:BB_0669"/>
<dbReference type="PATRIC" id="fig|224326.49.peg.1060"/>
<dbReference type="HOGENOM" id="CLU_000650_3_2_12"/>
<dbReference type="OrthoDB" id="9803176at2"/>
<dbReference type="BRENDA" id="2.7.13.3">
    <property type="organism ID" value="902"/>
</dbReference>
<dbReference type="Proteomes" id="UP000001807">
    <property type="component" value="Chromosome"/>
</dbReference>
<dbReference type="GO" id="GO:0005737">
    <property type="term" value="C:cytoplasm"/>
    <property type="evidence" value="ECO:0007669"/>
    <property type="project" value="UniProtKB-SubCell"/>
</dbReference>
<dbReference type="GO" id="GO:0005524">
    <property type="term" value="F:ATP binding"/>
    <property type="evidence" value="ECO:0007669"/>
    <property type="project" value="UniProtKB-KW"/>
</dbReference>
<dbReference type="GO" id="GO:0000155">
    <property type="term" value="F:phosphorelay sensor kinase activity"/>
    <property type="evidence" value="ECO:0007669"/>
    <property type="project" value="InterPro"/>
</dbReference>
<dbReference type="GO" id="GO:0006935">
    <property type="term" value="P:chemotaxis"/>
    <property type="evidence" value="ECO:0007669"/>
    <property type="project" value="UniProtKB-KW"/>
</dbReference>
<dbReference type="CDD" id="cd00731">
    <property type="entry name" value="CheA_reg"/>
    <property type="match status" value="1"/>
</dbReference>
<dbReference type="CDD" id="cd16916">
    <property type="entry name" value="HATPase_CheA-like"/>
    <property type="match status" value="1"/>
</dbReference>
<dbReference type="CDD" id="cd00088">
    <property type="entry name" value="HPT"/>
    <property type="match status" value="1"/>
</dbReference>
<dbReference type="FunFam" id="3.30.565.10:FF:000016">
    <property type="entry name" value="Chemotaxis protein CheA, putative"/>
    <property type="match status" value="1"/>
</dbReference>
<dbReference type="Gene3D" id="1.10.287.560">
    <property type="entry name" value="Histidine kinase CheA-like, homodimeric domain"/>
    <property type="match status" value="1"/>
</dbReference>
<dbReference type="Gene3D" id="3.30.70.1110">
    <property type="entry name" value="Histidine kinase CheA-like, P2 response regulator-binding domain"/>
    <property type="match status" value="1"/>
</dbReference>
<dbReference type="Gene3D" id="3.30.565.10">
    <property type="entry name" value="Histidine kinase-like ATPase, C-terminal domain"/>
    <property type="match status" value="1"/>
</dbReference>
<dbReference type="Gene3D" id="1.20.120.160">
    <property type="entry name" value="HPT domain"/>
    <property type="match status" value="1"/>
</dbReference>
<dbReference type="Gene3D" id="2.30.30.40">
    <property type="entry name" value="SH3 Domains"/>
    <property type="match status" value="1"/>
</dbReference>
<dbReference type="InterPro" id="IPR051315">
    <property type="entry name" value="Bact_Chemotaxis_CheA"/>
</dbReference>
<dbReference type="InterPro" id="IPR004105">
    <property type="entry name" value="CheA-like_dim"/>
</dbReference>
<dbReference type="InterPro" id="IPR037006">
    <property type="entry name" value="CheA-like_homodim_sf"/>
</dbReference>
<dbReference type="InterPro" id="IPR037052">
    <property type="entry name" value="CheA-like_P2_sf"/>
</dbReference>
<dbReference type="InterPro" id="IPR010808">
    <property type="entry name" value="CheA_P2-bd"/>
</dbReference>
<dbReference type="InterPro" id="IPR036061">
    <property type="entry name" value="CheW-like_dom_sf"/>
</dbReference>
<dbReference type="InterPro" id="IPR002545">
    <property type="entry name" value="CheW-lke_dom"/>
</dbReference>
<dbReference type="InterPro" id="IPR035891">
    <property type="entry name" value="CheY-binding_CheA"/>
</dbReference>
<dbReference type="InterPro" id="IPR036890">
    <property type="entry name" value="HATPase_C_sf"/>
</dbReference>
<dbReference type="InterPro" id="IPR005467">
    <property type="entry name" value="His_kinase_dom"/>
</dbReference>
<dbReference type="InterPro" id="IPR036641">
    <property type="entry name" value="HPT_dom_sf"/>
</dbReference>
<dbReference type="InterPro" id="IPR004358">
    <property type="entry name" value="Sig_transdc_His_kin-like_C"/>
</dbReference>
<dbReference type="InterPro" id="IPR008207">
    <property type="entry name" value="Sig_transdc_His_kin_Hpt_dom"/>
</dbReference>
<dbReference type="PANTHER" id="PTHR43395:SF10">
    <property type="entry name" value="CHEMOTAXIS PROTEIN CHEA"/>
    <property type="match status" value="1"/>
</dbReference>
<dbReference type="PANTHER" id="PTHR43395">
    <property type="entry name" value="SENSOR HISTIDINE KINASE CHEA"/>
    <property type="match status" value="1"/>
</dbReference>
<dbReference type="Pfam" id="PF01584">
    <property type="entry name" value="CheW"/>
    <property type="match status" value="1"/>
</dbReference>
<dbReference type="Pfam" id="PF02895">
    <property type="entry name" value="H-kinase_dim"/>
    <property type="match status" value="1"/>
</dbReference>
<dbReference type="Pfam" id="PF02518">
    <property type="entry name" value="HATPase_c"/>
    <property type="match status" value="1"/>
</dbReference>
<dbReference type="Pfam" id="PF01627">
    <property type="entry name" value="Hpt"/>
    <property type="match status" value="1"/>
</dbReference>
<dbReference type="Pfam" id="PF07194">
    <property type="entry name" value="P2"/>
    <property type="match status" value="1"/>
</dbReference>
<dbReference type="PRINTS" id="PR00344">
    <property type="entry name" value="BCTRLSENSOR"/>
</dbReference>
<dbReference type="SMART" id="SM00260">
    <property type="entry name" value="CheW"/>
    <property type="match status" value="1"/>
</dbReference>
<dbReference type="SMART" id="SM01231">
    <property type="entry name" value="H-kinase_dim"/>
    <property type="match status" value="1"/>
</dbReference>
<dbReference type="SMART" id="SM00387">
    <property type="entry name" value="HATPase_c"/>
    <property type="match status" value="1"/>
</dbReference>
<dbReference type="SMART" id="SM00073">
    <property type="entry name" value="HPT"/>
    <property type="match status" value="1"/>
</dbReference>
<dbReference type="SUPFAM" id="SSF55874">
    <property type="entry name" value="ATPase domain of HSP90 chaperone/DNA topoisomerase II/histidine kinase"/>
    <property type="match status" value="1"/>
</dbReference>
<dbReference type="SUPFAM" id="SSF50341">
    <property type="entry name" value="CheW-like"/>
    <property type="match status" value="1"/>
</dbReference>
<dbReference type="SUPFAM" id="SSF55052">
    <property type="entry name" value="CheY-binding domain of CheA"/>
    <property type="match status" value="2"/>
</dbReference>
<dbReference type="SUPFAM" id="SSF47226">
    <property type="entry name" value="Histidine-containing phosphotransfer domain, HPT domain"/>
    <property type="match status" value="1"/>
</dbReference>
<dbReference type="PROSITE" id="PS50851">
    <property type="entry name" value="CHEW"/>
    <property type="match status" value="1"/>
</dbReference>
<dbReference type="PROSITE" id="PS50109">
    <property type="entry name" value="HIS_KIN"/>
    <property type="match status" value="1"/>
</dbReference>
<dbReference type="PROSITE" id="PS50894">
    <property type="entry name" value="HPT"/>
    <property type="match status" value="1"/>
</dbReference>
<reference key="1">
    <citation type="journal article" date="1997" name="Res. Microbiol.">
        <title>A cheA cheW operon in Borrelia burgdorferi, the agent of Lyme disease.</title>
        <authorList>
            <person name="Trueba G.A."/>
            <person name="Old I.G."/>
            <person name="Saint-Girons I."/>
            <person name="Johnson R.C."/>
        </authorList>
    </citation>
    <scope>NUCLEOTIDE SEQUENCE [GENOMIC DNA]</scope>
    <source>
        <strain>212</strain>
    </source>
</reference>
<reference key="2">
    <citation type="journal article" date="1997" name="Nature">
        <title>Genomic sequence of a Lyme disease spirochaete, Borrelia burgdorferi.</title>
        <authorList>
            <person name="Fraser C.M."/>
            <person name="Casjens S."/>
            <person name="Huang W.M."/>
            <person name="Sutton G.G."/>
            <person name="Clayton R.A."/>
            <person name="Lathigra R."/>
            <person name="White O."/>
            <person name="Ketchum K.A."/>
            <person name="Dodson R.J."/>
            <person name="Hickey E.K."/>
            <person name="Gwinn M.L."/>
            <person name="Dougherty B.A."/>
            <person name="Tomb J.-F."/>
            <person name="Fleischmann R.D."/>
            <person name="Richardson D.L."/>
            <person name="Peterson J.D."/>
            <person name="Kerlavage A.R."/>
            <person name="Quackenbush J."/>
            <person name="Salzberg S.L."/>
            <person name="Hanson M."/>
            <person name="van Vugt R."/>
            <person name="Palmer N."/>
            <person name="Adams M.D."/>
            <person name="Gocayne J.D."/>
            <person name="Weidman J.F."/>
            <person name="Utterback T.R."/>
            <person name="Watthey L."/>
            <person name="McDonald L.A."/>
            <person name="Artiach P."/>
            <person name="Bowman C."/>
            <person name="Garland S.A."/>
            <person name="Fujii C."/>
            <person name="Cotton M.D."/>
            <person name="Horst K."/>
            <person name="Roberts K.M."/>
            <person name="Hatch B."/>
            <person name="Smith H.O."/>
            <person name="Venter J.C."/>
        </authorList>
    </citation>
    <scope>NUCLEOTIDE SEQUENCE [LARGE SCALE GENOMIC DNA]</scope>
    <source>
        <strain>ATCC 35210 / DSM 4680 / CIP 102532 / B31</strain>
    </source>
</reference>
<reference key="3">
    <citation type="journal article" date="1997" name="J. Bacteriol.">
        <title>An unexpected flaA homolog is present and expressed in Borrelia burgdorferi.</title>
        <authorList>
            <person name="Ge Y."/>
            <person name="Charon N.W."/>
        </authorList>
    </citation>
    <scope>NUCLEOTIDE SEQUENCE [GENOMIC DNA] OF 1-30</scope>
    <source>
        <strain>212</strain>
    </source>
</reference>
<organism>
    <name type="scientific">Borreliella burgdorferi (strain ATCC 35210 / DSM 4680 / CIP 102532 / B31)</name>
    <name type="common">Borrelia burgdorferi</name>
    <dbReference type="NCBI Taxonomy" id="224326"/>
    <lineage>
        <taxon>Bacteria</taxon>
        <taxon>Pseudomonadati</taxon>
        <taxon>Spirochaetota</taxon>
        <taxon>Spirochaetia</taxon>
        <taxon>Spirochaetales</taxon>
        <taxon>Borreliaceae</taxon>
        <taxon>Borreliella</taxon>
    </lineage>
</organism>
<keyword id="KW-0067">ATP-binding</keyword>
<keyword id="KW-0145">Chemotaxis</keyword>
<keyword id="KW-0963">Cytoplasm</keyword>
<keyword id="KW-0418">Kinase</keyword>
<keyword id="KW-0547">Nucleotide-binding</keyword>
<keyword id="KW-0597">Phosphoprotein</keyword>
<keyword id="KW-1185">Reference proteome</keyword>
<keyword id="KW-0808">Transferase</keyword>
<keyword id="KW-0902">Two-component regulatory system</keyword>
<name>CHEA_BORBU</name>
<sequence length="864" mass="98353">MEILDLENEELLGVFFEEAQNLVDILEENIMSLEDDPNNSDTIDEIFRAAHTLKGSSASLDMMELSDFTHIVEDVFDAIRDGKVNINNDLVDLLLSSLDVIKEMLALRIDGKVYLNDISDLKSKLKQFLVIDDQTFIKRFDGNSIKNNFCLSESDLEEIREGLGIGQKVLRISVVFNSNSNSEVENSGLKIFNILKNLGSVLHTIPKYEQIIEDKFLKRVDYYLIYSDIEGVKKSLDSLNLIESYLVDEFNVKEELKKLADEEIKDVDLDSNFVLNDNFDFTEDEISDLLLEVENQKLFKVRLDFVKDNPMATISGLQMLQALKSLGKIFKSIPDSSELLADKFFDFVIYYLISNTSEESIAKKINLPDVVSHFEIKNVNLESLKSVRLKEDDEAPFKENKNIKKNSPISVNLIRIDSKKIDYILNLVSEAVISKSSYNQINSEMITLFYNFNYFYDYQESFQRNFLIDLKIVFKDAGLTLEDEIESHINSLMSFKMEKALKDISELRNSFFRLLQNFKMTSGRLSRIITDLHESVLKTRMLPISNIFSRFTRVVRDLSKKLNKIVNLKMEGEETELDKSVIDDLVDPLMHCVRNSMDHGLETVEERVKRGKSKAGTIILRAKNEGNVISIEIEDDGIGIDPKVIRRKLIEKGTIKEDAIYSDFELINLIFAPGFSTAVQVTDLSGRGVGLDVVKKSIEKLNGTILVESEIGLGTIFKIKLPLTLVIIQGLLVKSGSETYVIPLNNVLETHRITEHDIKLLENYHEVYNLRDEVISVLRLDKLFNITRDDSLIEKFLIVVNTSNMKIAIVVDSILGEEDFVVKPIKDKFSSSAGIVGATTLGNGKVVLIIDVFKLFDLQKDTKE</sequence>
<protein>
    <recommendedName>
        <fullName>Chemotaxis protein CheA</fullName>
        <ecNumber>2.7.13.3</ecNumber>
    </recommendedName>
</protein>
<gene>
    <name type="primary">cheA</name>
    <name type="ordered locus">BB_0669</name>
</gene>
<feature type="chain" id="PRO_0000074712" description="Chemotaxis protein CheA">
    <location>
        <begin position="1"/>
        <end position="864"/>
    </location>
</feature>
<feature type="domain" description="HPt" evidence="4">
    <location>
        <begin position="1"/>
        <end position="108"/>
    </location>
</feature>
<feature type="domain" description="Histidine kinase" evidence="3">
    <location>
        <begin position="480"/>
        <end position="725"/>
    </location>
</feature>
<feature type="domain" description="CheW-like" evidence="2">
    <location>
        <begin position="727"/>
        <end position="864"/>
    </location>
</feature>
<feature type="modified residue" description="Phosphohistidine; by autocatalysis" evidence="3">
    <location>
        <position position="51"/>
    </location>
</feature>
<feature type="sequence conflict" description="In Ref. 1; AAB96835." evidence="5" ref="1">
    <original>L</original>
    <variation>I</variation>
    <location>
        <position position="11"/>
    </location>
</feature>
<feature type="sequence conflict" description="In Ref. 1; AAB96835." evidence="5" ref="1">
    <original>S</original>
    <variation>H</variation>
    <location>
        <position position="182"/>
    </location>
</feature>
<feature type="sequence conflict" description="In Ref. 1; AAB96835." evidence="5" ref="1">
    <original>S</original>
    <variation>G</variation>
    <location>
        <position position="187"/>
    </location>
</feature>
<feature type="sequence conflict" description="In Ref. 1; AAB96835." evidence="5" ref="1">
    <original>L</original>
    <variation>S</variation>
    <location>
        <position position="239"/>
    </location>
</feature>
<feature type="sequence conflict" description="In Ref. 1; AAB96835." evidence="5" ref="1">
    <original>A</original>
    <variation>S</variation>
    <location>
        <position position="362"/>
    </location>
</feature>
<feature type="sequence conflict" description="In Ref. 1; AAB96835." evidence="5" ref="1">
    <original>S</original>
    <variation>P</variation>
    <location>
        <position position="559"/>
    </location>
</feature>
<accession>Q44737</accession>
<accession>P70857</accession>
<accession>Q44877</accession>